<reference key="1">
    <citation type="submission" date="2007-07" db="EMBL/GenBank/DDBJ databases">
        <title>Genome sequence of Campylobacter curvus 525.92 isolated from human feces.</title>
        <authorList>
            <person name="Fouts D.E."/>
            <person name="Mongodin E.F."/>
            <person name="Puiu D."/>
            <person name="Sebastian Y."/>
            <person name="Miller W.G."/>
            <person name="Mandrell R.E."/>
            <person name="Lastovica A.J."/>
            <person name="Nelson K.E."/>
        </authorList>
    </citation>
    <scope>NUCLEOTIDE SEQUENCE [LARGE SCALE GENOMIC DNA]</scope>
    <source>
        <strain>525.92</strain>
    </source>
</reference>
<gene>
    <name evidence="1" type="primary">adk</name>
    <name type="ordered locus">Ccur92_05940</name>
    <name type="ORF">CCV52592_0466</name>
</gene>
<accession>A7GXF6</accession>
<feature type="chain" id="PRO_1000058808" description="Adenylate kinase">
    <location>
        <begin position="1"/>
        <end position="188"/>
    </location>
</feature>
<feature type="region of interest" description="NMP" evidence="1">
    <location>
        <begin position="33"/>
        <end position="62"/>
    </location>
</feature>
<feature type="region of interest" description="LID" evidence="1">
    <location>
        <begin position="129"/>
        <end position="135"/>
    </location>
</feature>
<feature type="binding site" evidence="1">
    <location>
        <begin position="12"/>
        <end position="17"/>
    </location>
    <ligand>
        <name>ATP</name>
        <dbReference type="ChEBI" id="CHEBI:30616"/>
    </ligand>
</feature>
<feature type="binding site" evidence="1">
    <location>
        <position position="34"/>
    </location>
    <ligand>
        <name>AMP</name>
        <dbReference type="ChEBI" id="CHEBI:456215"/>
    </ligand>
</feature>
<feature type="binding site" evidence="1">
    <location>
        <position position="39"/>
    </location>
    <ligand>
        <name>AMP</name>
        <dbReference type="ChEBI" id="CHEBI:456215"/>
    </ligand>
</feature>
<feature type="binding site" evidence="1">
    <location>
        <begin position="60"/>
        <end position="62"/>
    </location>
    <ligand>
        <name>AMP</name>
        <dbReference type="ChEBI" id="CHEBI:456215"/>
    </ligand>
</feature>
<feature type="binding site" evidence="1">
    <location>
        <begin position="87"/>
        <end position="90"/>
    </location>
    <ligand>
        <name>AMP</name>
        <dbReference type="ChEBI" id="CHEBI:456215"/>
    </ligand>
</feature>
<feature type="binding site" evidence="1">
    <location>
        <position position="94"/>
    </location>
    <ligand>
        <name>AMP</name>
        <dbReference type="ChEBI" id="CHEBI:456215"/>
    </ligand>
</feature>
<feature type="binding site" evidence="1">
    <location>
        <position position="130"/>
    </location>
    <ligand>
        <name>ATP</name>
        <dbReference type="ChEBI" id="CHEBI:30616"/>
    </ligand>
</feature>
<feature type="binding site" evidence="1">
    <location>
        <position position="132"/>
    </location>
    <ligand>
        <name>AMP</name>
        <dbReference type="ChEBI" id="CHEBI:456215"/>
    </ligand>
</feature>
<feature type="binding site" evidence="1">
    <location>
        <position position="144"/>
    </location>
    <ligand>
        <name>AMP</name>
        <dbReference type="ChEBI" id="CHEBI:456215"/>
    </ligand>
</feature>
<feature type="binding site" evidence="1">
    <location>
        <position position="172"/>
    </location>
    <ligand>
        <name>ATP</name>
        <dbReference type="ChEBI" id="CHEBI:30616"/>
    </ligand>
</feature>
<evidence type="ECO:0000255" key="1">
    <source>
        <dbReference type="HAMAP-Rule" id="MF_00235"/>
    </source>
</evidence>
<sequence length="188" mass="20649">MKKLFLIIGAPGSGKTTDASLIAKEDDKYAHFSTGDLLRAEVASGSELGKKIDSFISKGNLVPLEVVVNAIISAIKGSEKSNIIIDGYPRSVEQMTELDKVLSAQNEINLRGVIEVDVSEAIARERVLGRARGADDNNEVFNNRMKVYLDPIEAIRKFYKGKNLLHVVNGERTIEPIVADIKKLIENL</sequence>
<keyword id="KW-0067">ATP-binding</keyword>
<keyword id="KW-0963">Cytoplasm</keyword>
<keyword id="KW-0418">Kinase</keyword>
<keyword id="KW-0545">Nucleotide biosynthesis</keyword>
<keyword id="KW-0547">Nucleotide-binding</keyword>
<keyword id="KW-1185">Reference proteome</keyword>
<keyword id="KW-0808">Transferase</keyword>
<dbReference type="EC" id="2.7.4.3" evidence="1"/>
<dbReference type="EMBL" id="CP000767">
    <property type="protein sequence ID" value="EAU00745.1"/>
    <property type="molecule type" value="Genomic_DNA"/>
</dbReference>
<dbReference type="RefSeq" id="WP_009649933.1">
    <property type="nucleotide sequence ID" value="NC_009715.2"/>
</dbReference>
<dbReference type="SMR" id="A7GXF6"/>
<dbReference type="STRING" id="360105.CCV52592_0466"/>
<dbReference type="KEGG" id="ccv:CCV52592_0466"/>
<dbReference type="HOGENOM" id="CLU_032354_4_1_7"/>
<dbReference type="OrthoDB" id="9805030at2"/>
<dbReference type="UniPathway" id="UPA00588">
    <property type="reaction ID" value="UER00649"/>
</dbReference>
<dbReference type="Proteomes" id="UP000006380">
    <property type="component" value="Chromosome"/>
</dbReference>
<dbReference type="GO" id="GO:0005737">
    <property type="term" value="C:cytoplasm"/>
    <property type="evidence" value="ECO:0007669"/>
    <property type="project" value="UniProtKB-SubCell"/>
</dbReference>
<dbReference type="GO" id="GO:0004017">
    <property type="term" value="F:adenylate kinase activity"/>
    <property type="evidence" value="ECO:0007669"/>
    <property type="project" value="UniProtKB-UniRule"/>
</dbReference>
<dbReference type="GO" id="GO:0005524">
    <property type="term" value="F:ATP binding"/>
    <property type="evidence" value="ECO:0007669"/>
    <property type="project" value="UniProtKB-UniRule"/>
</dbReference>
<dbReference type="GO" id="GO:0044209">
    <property type="term" value="P:AMP salvage"/>
    <property type="evidence" value="ECO:0007669"/>
    <property type="project" value="UniProtKB-UniRule"/>
</dbReference>
<dbReference type="CDD" id="cd01428">
    <property type="entry name" value="ADK"/>
    <property type="match status" value="1"/>
</dbReference>
<dbReference type="Gene3D" id="3.40.50.300">
    <property type="entry name" value="P-loop containing nucleotide triphosphate hydrolases"/>
    <property type="match status" value="1"/>
</dbReference>
<dbReference type="HAMAP" id="MF_00235">
    <property type="entry name" value="Adenylate_kinase_Adk"/>
    <property type="match status" value="1"/>
</dbReference>
<dbReference type="InterPro" id="IPR000850">
    <property type="entry name" value="Adenylat/UMP-CMP_kin"/>
</dbReference>
<dbReference type="InterPro" id="IPR033690">
    <property type="entry name" value="Adenylat_kinase_CS"/>
</dbReference>
<dbReference type="InterPro" id="IPR027417">
    <property type="entry name" value="P-loop_NTPase"/>
</dbReference>
<dbReference type="NCBIfam" id="NF001384">
    <property type="entry name" value="PRK00279.2-2"/>
    <property type="match status" value="1"/>
</dbReference>
<dbReference type="PANTHER" id="PTHR23359">
    <property type="entry name" value="NUCLEOTIDE KINASE"/>
    <property type="match status" value="1"/>
</dbReference>
<dbReference type="Pfam" id="PF00406">
    <property type="entry name" value="ADK"/>
    <property type="match status" value="1"/>
</dbReference>
<dbReference type="PRINTS" id="PR00094">
    <property type="entry name" value="ADENYLTKNASE"/>
</dbReference>
<dbReference type="SUPFAM" id="SSF52540">
    <property type="entry name" value="P-loop containing nucleoside triphosphate hydrolases"/>
    <property type="match status" value="1"/>
</dbReference>
<dbReference type="PROSITE" id="PS00113">
    <property type="entry name" value="ADENYLATE_KINASE"/>
    <property type="match status" value="1"/>
</dbReference>
<name>KAD_CAMC5</name>
<organism>
    <name type="scientific">Campylobacter curvus (strain 525.92)</name>
    <dbReference type="NCBI Taxonomy" id="360105"/>
    <lineage>
        <taxon>Bacteria</taxon>
        <taxon>Pseudomonadati</taxon>
        <taxon>Campylobacterota</taxon>
        <taxon>Epsilonproteobacteria</taxon>
        <taxon>Campylobacterales</taxon>
        <taxon>Campylobacteraceae</taxon>
        <taxon>Campylobacter</taxon>
    </lineage>
</organism>
<proteinExistence type="inferred from homology"/>
<comment type="function">
    <text evidence="1">Catalyzes the reversible transfer of the terminal phosphate group between ATP and AMP. Plays an important role in cellular energy homeostasis and in adenine nucleotide metabolism.</text>
</comment>
<comment type="catalytic activity">
    <reaction evidence="1">
        <text>AMP + ATP = 2 ADP</text>
        <dbReference type="Rhea" id="RHEA:12973"/>
        <dbReference type="ChEBI" id="CHEBI:30616"/>
        <dbReference type="ChEBI" id="CHEBI:456215"/>
        <dbReference type="ChEBI" id="CHEBI:456216"/>
        <dbReference type="EC" id="2.7.4.3"/>
    </reaction>
</comment>
<comment type="pathway">
    <text evidence="1">Purine metabolism; AMP biosynthesis via salvage pathway; AMP from ADP: step 1/1.</text>
</comment>
<comment type="subunit">
    <text evidence="1">Monomer.</text>
</comment>
<comment type="subcellular location">
    <subcellularLocation>
        <location evidence="1">Cytoplasm</location>
    </subcellularLocation>
</comment>
<comment type="domain">
    <text evidence="1">Consists of three domains, a large central CORE domain and two small peripheral domains, NMPbind and LID, which undergo movements during catalysis. The LID domain closes over the site of phosphoryl transfer upon ATP binding. Assembling and dissambling the active center during each catalytic cycle provides an effective means to prevent ATP hydrolysis.</text>
</comment>
<comment type="similarity">
    <text evidence="1">Belongs to the adenylate kinase family.</text>
</comment>
<protein>
    <recommendedName>
        <fullName evidence="1">Adenylate kinase</fullName>
        <shortName evidence="1">AK</shortName>
        <ecNumber evidence="1">2.7.4.3</ecNumber>
    </recommendedName>
    <alternativeName>
        <fullName evidence="1">ATP-AMP transphosphorylase</fullName>
    </alternativeName>
    <alternativeName>
        <fullName evidence="1">ATP:AMP phosphotransferase</fullName>
    </alternativeName>
    <alternativeName>
        <fullName evidence="1">Adenylate monophosphate kinase</fullName>
    </alternativeName>
</protein>